<accession>O27398</accession>
<proteinExistence type="inferred from homology"/>
<evidence type="ECO:0000250" key="1"/>
<evidence type="ECO:0000255" key="2"/>
<evidence type="ECO:0000305" key="3"/>
<gene>
    <name type="primary">hisF</name>
    <name type="ordered locus">MTH_1343</name>
</gene>
<dbReference type="EC" id="4.3.2.10"/>
<dbReference type="EMBL" id="AE000666">
    <property type="protein sequence ID" value="AAB85821.1"/>
    <property type="status" value="ALT_INIT"/>
    <property type="molecule type" value="Genomic_DNA"/>
</dbReference>
<dbReference type="PIR" id="F69045">
    <property type="entry name" value="F69045"/>
</dbReference>
<dbReference type="RefSeq" id="WP_048061292.1">
    <property type="nucleotide sequence ID" value="NC_000916.1"/>
</dbReference>
<dbReference type="SMR" id="O27398"/>
<dbReference type="FunCoup" id="O27398">
    <property type="interactions" value="192"/>
</dbReference>
<dbReference type="STRING" id="187420.MTH_1343"/>
<dbReference type="PaxDb" id="187420-MTH_1343"/>
<dbReference type="EnsemblBacteria" id="AAB85821">
    <property type="protein sequence ID" value="AAB85821"/>
    <property type="gene ID" value="MTH_1343"/>
</dbReference>
<dbReference type="GeneID" id="1471060"/>
<dbReference type="GeneID" id="77401866"/>
<dbReference type="KEGG" id="mth:MTH_1343"/>
<dbReference type="PATRIC" id="fig|187420.15.peg.1309"/>
<dbReference type="HOGENOM" id="CLU_048577_4_0_2"/>
<dbReference type="InParanoid" id="O27398"/>
<dbReference type="UniPathway" id="UPA00031">
    <property type="reaction ID" value="UER00010"/>
</dbReference>
<dbReference type="Proteomes" id="UP000005223">
    <property type="component" value="Chromosome"/>
</dbReference>
<dbReference type="GO" id="GO:0005737">
    <property type="term" value="C:cytoplasm"/>
    <property type="evidence" value="ECO:0007669"/>
    <property type="project" value="UniProtKB-SubCell"/>
</dbReference>
<dbReference type="GO" id="GO:0000107">
    <property type="term" value="F:imidazoleglycerol-phosphate synthase activity"/>
    <property type="evidence" value="ECO:0007669"/>
    <property type="project" value="UniProtKB-UniRule"/>
</dbReference>
<dbReference type="GO" id="GO:0016829">
    <property type="term" value="F:lyase activity"/>
    <property type="evidence" value="ECO:0007669"/>
    <property type="project" value="UniProtKB-KW"/>
</dbReference>
<dbReference type="GO" id="GO:0000105">
    <property type="term" value="P:L-histidine biosynthetic process"/>
    <property type="evidence" value="ECO:0007669"/>
    <property type="project" value="UniProtKB-UniRule"/>
</dbReference>
<dbReference type="CDD" id="cd04731">
    <property type="entry name" value="HisF"/>
    <property type="match status" value="1"/>
</dbReference>
<dbReference type="FunFam" id="3.20.20.70:FF:000006">
    <property type="entry name" value="Imidazole glycerol phosphate synthase subunit HisF"/>
    <property type="match status" value="1"/>
</dbReference>
<dbReference type="Gene3D" id="3.20.20.70">
    <property type="entry name" value="Aldolase class I"/>
    <property type="match status" value="1"/>
</dbReference>
<dbReference type="HAMAP" id="MF_01013">
    <property type="entry name" value="HisF"/>
    <property type="match status" value="1"/>
</dbReference>
<dbReference type="InterPro" id="IPR013785">
    <property type="entry name" value="Aldolase_TIM"/>
</dbReference>
<dbReference type="InterPro" id="IPR006062">
    <property type="entry name" value="His_biosynth"/>
</dbReference>
<dbReference type="InterPro" id="IPR004651">
    <property type="entry name" value="HisF"/>
</dbReference>
<dbReference type="InterPro" id="IPR050064">
    <property type="entry name" value="IGPS_HisA/HisF"/>
</dbReference>
<dbReference type="InterPro" id="IPR011060">
    <property type="entry name" value="RibuloseP-bd_barrel"/>
</dbReference>
<dbReference type="NCBIfam" id="TIGR00735">
    <property type="entry name" value="hisF"/>
    <property type="match status" value="1"/>
</dbReference>
<dbReference type="PANTHER" id="PTHR21235:SF2">
    <property type="entry name" value="IMIDAZOLE GLYCEROL PHOSPHATE SYNTHASE HISHF"/>
    <property type="match status" value="1"/>
</dbReference>
<dbReference type="PANTHER" id="PTHR21235">
    <property type="entry name" value="IMIDAZOLE GLYCEROL PHOSPHATE SYNTHASE SUBUNIT HISF/H IGP SYNTHASE SUBUNIT HISF/H"/>
    <property type="match status" value="1"/>
</dbReference>
<dbReference type="Pfam" id="PF00977">
    <property type="entry name" value="His_biosynth"/>
    <property type="match status" value="1"/>
</dbReference>
<dbReference type="SUPFAM" id="SSF51366">
    <property type="entry name" value="Ribulose-phoshate binding barrel"/>
    <property type="match status" value="1"/>
</dbReference>
<keyword id="KW-0028">Amino-acid biosynthesis</keyword>
<keyword id="KW-0963">Cytoplasm</keyword>
<keyword id="KW-0368">Histidine biosynthesis</keyword>
<keyword id="KW-0456">Lyase</keyword>
<keyword id="KW-1185">Reference proteome</keyword>
<organism>
    <name type="scientific">Methanothermobacter thermautotrophicus (strain ATCC 29096 / DSM 1053 / JCM 10044 / NBRC 100330 / Delta H)</name>
    <name type="common">Methanobacterium thermoautotrophicum</name>
    <dbReference type="NCBI Taxonomy" id="187420"/>
    <lineage>
        <taxon>Archaea</taxon>
        <taxon>Methanobacteriati</taxon>
        <taxon>Methanobacteriota</taxon>
        <taxon>Methanomada group</taxon>
        <taxon>Methanobacteria</taxon>
        <taxon>Methanobacteriales</taxon>
        <taxon>Methanobacteriaceae</taxon>
        <taxon>Methanothermobacter</taxon>
    </lineage>
</organism>
<protein>
    <recommendedName>
        <fullName>Imidazole glycerol phosphate synthase subunit HisF</fullName>
        <ecNumber>4.3.2.10</ecNumber>
    </recommendedName>
    <alternativeName>
        <fullName>IGP synthase cyclase subunit</fullName>
    </alternativeName>
    <alternativeName>
        <fullName>IGP synthase subunit HisF</fullName>
    </alternativeName>
    <alternativeName>
        <fullName>ImGP synthase subunit HisF</fullName>
        <shortName>IGPS subunit HisF</shortName>
    </alternativeName>
</protein>
<reference key="1">
    <citation type="journal article" date="1997" name="J. Bacteriol.">
        <title>Complete genome sequence of Methanobacterium thermoautotrophicum deltaH: functional analysis and comparative genomics.</title>
        <authorList>
            <person name="Smith D.R."/>
            <person name="Doucette-Stamm L.A."/>
            <person name="Deloughery C."/>
            <person name="Lee H.-M."/>
            <person name="Dubois J."/>
            <person name="Aldredge T."/>
            <person name="Bashirzadeh R."/>
            <person name="Blakely D."/>
            <person name="Cook R."/>
            <person name="Gilbert K."/>
            <person name="Harrison D."/>
            <person name="Hoang L."/>
            <person name="Keagle P."/>
            <person name="Lumm W."/>
            <person name="Pothier B."/>
            <person name="Qiu D."/>
            <person name="Spadafora R."/>
            <person name="Vicare R."/>
            <person name="Wang Y."/>
            <person name="Wierzbowski J."/>
            <person name="Gibson R."/>
            <person name="Jiwani N."/>
            <person name="Caruso A."/>
            <person name="Bush D."/>
            <person name="Safer H."/>
            <person name="Patwell D."/>
            <person name="Prabhakar S."/>
            <person name="McDougall S."/>
            <person name="Shimer G."/>
            <person name="Goyal A."/>
            <person name="Pietrovski S."/>
            <person name="Church G.M."/>
            <person name="Daniels C.J."/>
            <person name="Mao J.-I."/>
            <person name="Rice P."/>
            <person name="Noelling J."/>
            <person name="Reeve J.N."/>
        </authorList>
    </citation>
    <scope>NUCLEOTIDE SEQUENCE [LARGE SCALE GENOMIC DNA]</scope>
    <source>
        <strain>ATCC 29096 / DSM 1053 / JCM 10044 / NBRC 100330 / Delta H</strain>
    </source>
</reference>
<feature type="chain" id="PRO_0000142284" description="Imidazole glycerol phosphate synthase subunit HisF">
    <location>
        <begin position="1"/>
        <end position="274"/>
    </location>
</feature>
<feature type="active site" evidence="2">
    <location>
        <position position="11"/>
    </location>
</feature>
<feature type="active site" evidence="2">
    <location>
        <position position="134"/>
    </location>
</feature>
<sequence>MLAKRIIPCLDCDLQVPNGRVVKGVEFKQIRYAGDPVELATRYYEDGADEIVFLDITASHERRETMTHVIEATTENVFVPICVGGGIRKPEDYFKMLKAGADKCSTNTAAIKNPELINEASDLVGSQACVVAIDAKRRYIENPRESDERFIIEVDDGYCWYECSIYGGREFTGIDAVKWAMECQDRGAGEILLTSMDRDGTKMGYDIPLTRTMSENLDIPVIASGGVGEPEHIYEAFTDGKADAALAASIFHFNEYPVPAVKEYLRSRGVPIRL</sequence>
<comment type="function">
    <text evidence="1">IGPS catalyzes the conversion of PRFAR and glutamine to IGP, AICAR and glutamate. The HisF subunit catalyzes the cyclization activity that produces IGP and AICAR from PRFAR using the ammonia provided by the HisH subunit (By similarity).</text>
</comment>
<comment type="catalytic activity">
    <reaction>
        <text>5-[(5-phospho-1-deoxy-D-ribulos-1-ylimino)methylamino]-1-(5-phospho-beta-D-ribosyl)imidazole-4-carboxamide + L-glutamine = D-erythro-1-(imidazol-4-yl)glycerol 3-phosphate + 5-amino-1-(5-phospho-beta-D-ribosyl)imidazole-4-carboxamide + L-glutamate + H(+)</text>
        <dbReference type="Rhea" id="RHEA:24793"/>
        <dbReference type="ChEBI" id="CHEBI:15378"/>
        <dbReference type="ChEBI" id="CHEBI:29985"/>
        <dbReference type="ChEBI" id="CHEBI:58278"/>
        <dbReference type="ChEBI" id="CHEBI:58359"/>
        <dbReference type="ChEBI" id="CHEBI:58475"/>
        <dbReference type="ChEBI" id="CHEBI:58525"/>
        <dbReference type="EC" id="4.3.2.10"/>
    </reaction>
</comment>
<comment type="pathway">
    <text>Amino-acid biosynthesis; L-histidine biosynthesis; L-histidine from 5-phospho-alpha-D-ribose 1-diphosphate: step 5/9.</text>
</comment>
<comment type="subunit">
    <text evidence="1">Heterodimer of HisH and HisF.</text>
</comment>
<comment type="subcellular location">
    <subcellularLocation>
        <location evidence="1">Cytoplasm</location>
    </subcellularLocation>
</comment>
<comment type="similarity">
    <text evidence="3">Belongs to the HisA/HisF family.</text>
</comment>
<comment type="sequence caution" evidence="3">
    <conflict type="erroneous initiation">
        <sequence resource="EMBL-CDS" id="AAB85821"/>
    </conflict>
</comment>
<name>HIS6_METTH</name>